<reference key="1">
    <citation type="journal article" date="2003" name="Proc. Natl. Acad. Sci. U.S.A.">
        <title>Complete genome sequence of the Q-fever pathogen, Coxiella burnetii.</title>
        <authorList>
            <person name="Seshadri R."/>
            <person name="Paulsen I.T."/>
            <person name="Eisen J.A."/>
            <person name="Read T.D."/>
            <person name="Nelson K.E."/>
            <person name="Nelson W.C."/>
            <person name="Ward N.L."/>
            <person name="Tettelin H."/>
            <person name="Davidsen T.M."/>
            <person name="Beanan M.J."/>
            <person name="DeBoy R.T."/>
            <person name="Daugherty S.C."/>
            <person name="Brinkac L.M."/>
            <person name="Madupu R."/>
            <person name="Dodson R.J."/>
            <person name="Khouri H.M."/>
            <person name="Lee K.H."/>
            <person name="Carty H.A."/>
            <person name="Scanlan D."/>
            <person name="Heinzen R.A."/>
            <person name="Thompson H.A."/>
            <person name="Samuel J.E."/>
            <person name="Fraser C.M."/>
            <person name="Heidelberg J.F."/>
        </authorList>
    </citation>
    <scope>NUCLEOTIDE SEQUENCE [LARGE SCALE GENOMIC DNA]</scope>
    <source>
        <strain>RSA 493 / Nine Mile phase I</strain>
    </source>
</reference>
<comment type="function">
    <text evidence="1">Catalyzes the NADPH-dependent reduction of 7-cyano-7-deazaguanine (preQ0) to 7-aminomethyl-7-deazaguanine (preQ1).</text>
</comment>
<comment type="catalytic activity">
    <reaction evidence="1">
        <text>7-aminomethyl-7-carbaguanine + 2 NADP(+) = 7-cyano-7-deazaguanine + 2 NADPH + 3 H(+)</text>
        <dbReference type="Rhea" id="RHEA:13409"/>
        <dbReference type="ChEBI" id="CHEBI:15378"/>
        <dbReference type="ChEBI" id="CHEBI:45075"/>
        <dbReference type="ChEBI" id="CHEBI:57783"/>
        <dbReference type="ChEBI" id="CHEBI:58349"/>
        <dbReference type="ChEBI" id="CHEBI:58703"/>
        <dbReference type="EC" id="1.7.1.13"/>
    </reaction>
</comment>
<comment type="pathway">
    <text evidence="1">tRNA modification; tRNA-queuosine biosynthesis.</text>
</comment>
<comment type="subunit">
    <text evidence="1">Homodimer.</text>
</comment>
<comment type="subcellular location">
    <subcellularLocation>
        <location evidence="1">Cytoplasm</location>
    </subcellularLocation>
</comment>
<comment type="similarity">
    <text evidence="1">Belongs to the GTP cyclohydrolase I family. QueF type 2 subfamily.</text>
</comment>
<dbReference type="EC" id="1.7.1.13" evidence="1"/>
<dbReference type="EMBL" id="AE016828">
    <property type="protein sequence ID" value="AAO89715.1"/>
    <property type="molecule type" value="Genomic_DNA"/>
</dbReference>
<dbReference type="RefSeq" id="NP_819201.1">
    <property type="nucleotide sequence ID" value="NC_002971.4"/>
</dbReference>
<dbReference type="RefSeq" id="WP_010957407.1">
    <property type="nucleotide sequence ID" value="NZ_CCYB01000063.1"/>
</dbReference>
<dbReference type="SMR" id="Q83F02"/>
<dbReference type="STRING" id="227377.CBU_0151"/>
<dbReference type="EnsemblBacteria" id="AAO89715">
    <property type="protein sequence ID" value="AAO89715"/>
    <property type="gene ID" value="CBU_0151"/>
</dbReference>
<dbReference type="GeneID" id="1208022"/>
<dbReference type="KEGG" id="cbu:CBU_0151"/>
<dbReference type="PATRIC" id="fig|227377.7.peg.152"/>
<dbReference type="eggNOG" id="COG0780">
    <property type="taxonomic scope" value="Bacteria"/>
</dbReference>
<dbReference type="eggNOG" id="COG2904">
    <property type="taxonomic scope" value="Bacteria"/>
</dbReference>
<dbReference type="HOGENOM" id="CLU_054738_0_0_6"/>
<dbReference type="OrthoDB" id="9789995at2"/>
<dbReference type="UniPathway" id="UPA00392"/>
<dbReference type="Proteomes" id="UP000002671">
    <property type="component" value="Chromosome"/>
</dbReference>
<dbReference type="GO" id="GO:0005829">
    <property type="term" value="C:cytosol"/>
    <property type="evidence" value="ECO:0000318"/>
    <property type="project" value="GO_Central"/>
</dbReference>
<dbReference type="GO" id="GO:0033739">
    <property type="term" value="F:preQ1 synthase activity"/>
    <property type="evidence" value="ECO:0000318"/>
    <property type="project" value="GO_Central"/>
</dbReference>
<dbReference type="GO" id="GO:0008616">
    <property type="term" value="P:queuosine biosynthetic process"/>
    <property type="evidence" value="ECO:0000318"/>
    <property type="project" value="GO_Central"/>
</dbReference>
<dbReference type="GO" id="GO:0006400">
    <property type="term" value="P:tRNA modification"/>
    <property type="evidence" value="ECO:0007669"/>
    <property type="project" value="UniProtKB-UniRule"/>
</dbReference>
<dbReference type="Gene3D" id="3.30.1130.10">
    <property type="match status" value="2"/>
</dbReference>
<dbReference type="HAMAP" id="MF_00817">
    <property type="entry name" value="QueF_type2"/>
    <property type="match status" value="1"/>
</dbReference>
<dbReference type="InterPro" id="IPR043133">
    <property type="entry name" value="GTP-CH-I_C/QueF"/>
</dbReference>
<dbReference type="InterPro" id="IPR050084">
    <property type="entry name" value="NADPH_dep_7-cyano-7-deazaG_red"/>
</dbReference>
<dbReference type="InterPro" id="IPR029500">
    <property type="entry name" value="QueF"/>
</dbReference>
<dbReference type="InterPro" id="IPR029139">
    <property type="entry name" value="QueF_N"/>
</dbReference>
<dbReference type="InterPro" id="IPR016428">
    <property type="entry name" value="QueF_type2"/>
</dbReference>
<dbReference type="NCBIfam" id="TIGR03138">
    <property type="entry name" value="QueF"/>
    <property type="match status" value="1"/>
</dbReference>
<dbReference type="PANTHER" id="PTHR34354">
    <property type="entry name" value="NADPH-DEPENDENT 7-CYANO-7-DEAZAGUANINE REDUCTASE"/>
    <property type="match status" value="1"/>
</dbReference>
<dbReference type="PANTHER" id="PTHR34354:SF1">
    <property type="entry name" value="NADPH-DEPENDENT 7-CYANO-7-DEAZAGUANINE REDUCTASE"/>
    <property type="match status" value="1"/>
</dbReference>
<dbReference type="Pfam" id="PF14489">
    <property type="entry name" value="QueF"/>
    <property type="match status" value="1"/>
</dbReference>
<dbReference type="Pfam" id="PF14819">
    <property type="entry name" value="QueF_N"/>
    <property type="match status" value="1"/>
</dbReference>
<dbReference type="PIRSF" id="PIRSF004750">
    <property type="entry name" value="Nitrile_oxidored_YqcD_prd"/>
    <property type="match status" value="1"/>
</dbReference>
<dbReference type="SUPFAM" id="SSF55620">
    <property type="entry name" value="Tetrahydrobiopterin biosynthesis enzymes-like"/>
    <property type="match status" value="1"/>
</dbReference>
<evidence type="ECO:0000255" key="1">
    <source>
        <dbReference type="HAMAP-Rule" id="MF_00817"/>
    </source>
</evidence>
<evidence type="ECO:0000256" key="2">
    <source>
        <dbReference type="SAM" id="MobiDB-lite"/>
    </source>
</evidence>
<accession>Q83F02</accession>
<organism>
    <name type="scientific">Coxiella burnetii (strain RSA 493 / Nine Mile phase I)</name>
    <dbReference type="NCBI Taxonomy" id="227377"/>
    <lineage>
        <taxon>Bacteria</taxon>
        <taxon>Pseudomonadati</taxon>
        <taxon>Pseudomonadota</taxon>
        <taxon>Gammaproteobacteria</taxon>
        <taxon>Legionellales</taxon>
        <taxon>Coxiellaceae</taxon>
        <taxon>Coxiella</taxon>
    </lineage>
</organism>
<keyword id="KW-0963">Cytoplasm</keyword>
<keyword id="KW-0521">NADP</keyword>
<keyword id="KW-0560">Oxidoreductase</keyword>
<keyword id="KW-0671">Queuosine biosynthesis</keyword>
<keyword id="KW-1185">Reference proteome</keyword>
<gene>
    <name evidence="1" type="primary">queF</name>
    <name type="ordered locus">CBU_0151</name>
</gene>
<proteinExistence type="inferred from homology"/>
<sequence>MSTLRVLHEKSELGKTTVYPKEYAPHLLLPIPRDLNRKTLNVNVSEPPPFYGYDLWNAYELSWLNEKGKPFAARGEFIIPATSSHLIESKSFKLYLNSFNNERFADAAAVSQTMKRDLSKRVNESVTVNFILHETEIPVAYSPKGSLLDVLDIAIDTYSPDPNLLSTSQETVTETLYSHLLKSNCPVTGQPDWGSIEIHYTGPKIDHVQLLKYIISYRNHEEFHEACVERFFMDILRHCRPQELTVQARYTRRGGLDINPYRSTNPTFSVQNHRSFRQ</sequence>
<feature type="chain" id="PRO_0000163028" description="NADPH-dependent 7-cyano-7-deazaguanine reductase">
    <location>
        <begin position="1"/>
        <end position="278"/>
    </location>
</feature>
<feature type="region of interest" description="Disordered" evidence="2">
    <location>
        <begin position="255"/>
        <end position="278"/>
    </location>
</feature>
<feature type="compositionally biased region" description="Polar residues" evidence="2">
    <location>
        <begin position="261"/>
        <end position="278"/>
    </location>
</feature>
<feature type="active site" description="Thioimide intermediate" evidence="1">
    <location>
        <position position="185"/>
    </location>
</feature>
<feature type="active site" description="Proton donor" evidence="1">
    <location>
        <position position="192"/>
    </location>
</feature>
<feature type="binding site" evidence="1">
    <location>
        <begin position="87"/>
        <end position="89"/>
    </location>
    <ligand>
        <name>substrate</name>
    </ligand>
</feature>
<feature type="binding site" evidence="1">
    <location>
        <begin position="89"/>
        <end position="90"/>
    </location>
    <ligand>
        <name>NADPH</name>
        <dbReference type="ChEBI" id="CHEBI:57783"/>
    </ligand>
</feature>
<feature type="binding site" evidence="1">
    <location>
        <begin position="224"/>
        <end position="225"/>
    </location>
    <ligand>
        <name>substrate</name>
    </ligand>
</feature>
<feature type="binding site" evidence="1">
    <location>
        <begin position="253"/>
        <end position="254"/>
    </location>
    <ligand>
        <name>NADPH</name>
        <dbReference type="ChEBI" id="CHEBI:57783"/>
    </ligand>
</feature>
<protein>
    <recommendedName>
        <fullName evidence="1">NADPH-dependent 7-cyano-7-deazaguanine reductase</fullName>
        <ecNumber evidence="1">1.7.1.13</ecNumber>
    </recommendedName>
    <alternativeName>
        <fullName evidence="1">7-cyano-7-carbaguanine reductase</fullName>
    </alternativeName>
    <alternativeName>
        <fullName evidence="1">NADPH-dependent nitrile oxidoreductase</fullName>
    </alternativeName>
    <alternativeName>
        <fullName evidence="1">PreQ(0) reductase</fullName>
    </alternativeName>
</protein>
<name>QUEF_COXBU</name>